<reference key="1">
    <citation type="journal article" date="1998" name="Nature">
        <title>Glutamate-receptor genes in plants.</title>
        <authorList>
            <person name="Lam H.-M."/>
            <person name="Chiu J.C."/>
            <person name="Hsieh M.-H."/>
            <person name="Meisel L."/>
            <person name="Oliveira I.C."/>
            <person name="Shin M."/>
            <person name="Coruzzi G.M."/>
        </authorList>
    </citation>
    <scope>NUCLEOTIDE SEQUENCE [MRNA]</scope>
    <source>
        <strain>cv. Columbia</strain>
    </source>
</reference>
<reference key="2">
    <citation type="journal article" date="2000" name="Nature">
        <title>Sequence and analysis of chromosome 3 of the plant Arabidopsis thaliana.</title>
        <authorList>
            <person name="Salanoubat M."/>
            <person name="Lemcke K."/>
            <person name="Rieger M."/>
            <person name="Ansorge W."/>
            <person name="Unseld M."/>
            <person name="Fartmann B."/>
            <person name="Valle G."/>
            <person name="Bloecker H."/>
            <person name="Perez-Alonso M."/>
            <person name="Obermaier B."/>
            <person name="Delseny M."/>
            <person name="Boutry M."/>
            <person name="Grivell L.A."/>
            <person name="Mache R."/>
            <person name="Puigdomenech P."/>
            <person name="De Simone V."/>
            <person name="Choisne N."/>
            <person name="Artiguenave F."/>
            <person name="Robert C."/>
            <person name="Brottier P."/>
            <person name="Wincker P."/>
            <person name="Cattolico L."/>
            <person name="Weissenbach J."/>
            <person name="Saurin W."/>
            <person name="Quetier F."/>
            <person name="Schaefer M."/>
            <person name="Mueller-Auer S."/>
            <person name="Gabel C."/>
            <person name="Fuchs M."/>
            <person name="Benes V."/>
            <person name="Wurmbach E."/>
            <person name="Drzonek H."/>
            <person name="Erfle H."/>
            <person name="Jordan N."/>
            <person name="Bangert S."/>
            <person name="Wiedelmann R."/>
            <person name="Kranz H."/>
            <person name="Voss H."/>
            <person name="Holland R."/>
            <person name="Brandt P."/>
            <person name="Nyakatura G."/>
            <person name="Vezzi A."/>
            <person name="D'Angelo M."/>
            <person name="Pallavicini A."/>
            <person name="Toppo S."/>
            <person name="Simionati B."/>
            <person name="Conrad A."/>
            <person name="Hornischer K."/>
            <person name="Kauer G."/>
            <person name="Loehnert T.-H."/>
            <person name="Nordsiek G."/>
            <person name="Reichelt J."/>
            <person name="Scharfe M."/>
            <person name="Schoen O."/>
            <person name="Bargues M."/>
            <person name="Terol J."/>
            <person name="Climent J."/>
            <person name="Navarro P."/>
            <person name="Collado C."/>
            <person name="Perez-Perez A."/>
            <person name="Ottenwaelder B."/>
            <person name="Duchemin D."/>
            <person name="Cooke R."/>
            <person name="Laudie M."/>
            <person name="Berger-Llauro C."/>
            <person name="Purnelle B."/>
            <person name="Masuy D."/>
            <person name="de Haan M."/>
            <person name="Maarse A.C."/>
            <person name="Alcaraz J.-P."/>
            <person name="Cottet A."/>
            <person name="Casacuberta E."/>
            <person name="Monfort A."/>
            <person name="Argiriou A."/>
            <person name="Flores M."/>
            <person name="Liguori R."/>
            <person name="Vitale D."/>
            <person name="Mannhaupt G."/>
            <person name="Haase D."/>
            <person name="Schoof H."/>
            <person name="Rudd S."/>
            <person name="Zaccaria P."/>
            <person name="Mewes H.-W."/>
            <person name="Mayer K.F.X."/>
            <person name="Kaul S."/>
            <person name="Town C.D."/>
            <person name="Koo H.L."/>
            <person name="Tallon L.J."/>
            <person name="Jenkins J."/>
            <person name="Rooney T."/>
            <person name="Rizzo M."/>
            <person name="Walts A."/>
            <person name="Utterback T."/>
            <person name="Fujii C.Y."/>
            <person name="Shea T.P."/>
            <person name="Creasy T.H."/>
            <person name="Haas B."/>
            <person name="Maiti R."/>
            <person name="Wu D."/>
            <person name="Peterson J."/>
            <person name="Van Aken S."/>
            <person name="Pai G."/>
            <person name="Militscher J."/>
            <person name="Sellers P."/>
            <person name="Gill J.E."/>
            <person name="Feldblyum T.V."/>
            <person name="Preuss D."/>
            <person name="Lin X."/>
            <person name="Nierman W.C."/>
            <person name="Salzberg S.L."/>
            <person name="White O."/>
            <person name="Venter J.C."/>
            <person name="Fraser C.M."/>
            <person name="Kaneko T."/>
            <person name="Nakamura Y."/>
            <person name="Sato S."/>
            <person name="Kato T."/>
            <person name="Asamizu E."/>
            <person name="Sasamoto S."/>
            <person name="Kimura T."/>
            <person name="Idesawa K."/>
            <person name="Kawashima K."/>
            <person name="Kishida Y."/>
            <person name="Kiyokawa C."/>
            <person name="Kohara M."/>
            <person name="Matsumoto M."/>
            <person name="Matsuno A."/>
            <person name="Muraki A."/>
            <person name="Nakayama S."/>
            <person name="Nakazaki N."/>
            <person name="Shinpo S."/>
            <person name="Takeuchi C."/>
            <person name="Wada T."/>
            <person name="Watanabe A."/>
            <person name="Yamada M."/>
            <person name="Yasuda M."/>
            <person name="Tabata S."/>
        </authorList>
    </citation>
    <scope>NUCLEOTIDE SEQUENCE [LARGE SCALE GENOMIC DNA]</scope>
    <source>
        <strain>cv. Columbia</strain>
    </source>
</reference>
<reference key="3">
    <citation type="journal article" date="2017" name="Plant J.">
        <title>Araport11: a complete reannotation of the Arabidopsis thaliana reference genome.</title>
        <authorList>
            <person name="Cheng C.Y."/>
            <person name="Krishnakumar V."/>
            <person name="Chan A.P."/>
            <person name="Thibaud-Nissen F."/>
            <person name="Schobel S."/>
            <person name="Town C.D."/>
        </authorList>
    </citation>
    <scope>GENOME REANNOTATION</scope>
    <source>
        <strain>cv. Columbia</strain>
    </source>
</reference>
<reference key="4">
    <citation type="journal article" date="2002" name="Science">
        <title>Functional annotation of a full-length Arabidopsis cDNA collection.</title>
        <authorList>
            <person name="Seki M."/>
            <person name="Narusaka M."/>
            <person name="Kamiya A."/>
            <person name="Ishida J."/>
            <person name="Satou M."/>
            <person name="Sakurai T."/>
            <person name="Nakajima M."/>
            <person name="Enju A."/>
            <person name="Akiyama K."/>
            <person name="Oono Y."/>
            <person name="Muramatsu M."/>
            <person name="Hayashizaki Y."/>
            <person name="Kawai J."/>
            <person name="Carninci P."/>
            <person name="Itoh M."/>
            <person name="Ishii Y."/>
            <person name="Arakawa T."/>
            <person name="Shibata K."/>
            <person name="Shinagawa A."/>
            <person name="Shinozaki K."/>
        </authorList>
    </citation>
    <scope>NUCLEOTIDE SEQUENCE [LARGE SCALE MRNA]</scope>
    <source>
        <strain>cv. Columbia</strain>
    </source>
</reference>
<reference key="5">
    <citation type="journal article" date="2001" name="Science">
        <title>The identity of plant glutamate receptors.</title>
        <authorList>
            <person name="Lacombe B."/>
            <person name="Becker D."/>
            <person name="Hedrich R."/>
            <person name="DeSalle R."/>
            <person name="Hollmann M."/>
            <person name="Kwak J.M."/>
            <person name="Schroeder J.I."/>
            <person name="Le Novere N."/>
            <person name="Nam H.G."/>
            <person name="Spalding E.P."/>
            <person name="Tester M."/>
            <person name="Turano F.J."/>
            <person name="Chiu J."/>
            <person name="Coruzzi G."/>
        </authorList>
    </citation>
    <scope>GENE FAMILY</scope>
    <scope>NOMENCLATURE</scope>
</reference>
<reference key="6">
    <citation type="journal article" date="2002" name="Mol. Biol. Evol.">
        <title>Phylogenetic and expression analysis of the glutamate-receptor-like gene family in Arabidopsis thaliana.</title>
        <authorList>
            <person name="Chiu J.C."/>
            <person name="Brenner E.D."/>
            <person name="DeSalle R."/>
            <person name="Nitabach M.N."/>
            <person name="Holmes T.C."/>
            <person name="Coruzzi G.M."/>
        </authorList>
    </citation>
    <scope>TISSUE SPECIFICITY</scope>
</reference>
<reference key="7">
    <citation type="journal article" date="2003" name="Proc. Natl. Acad. Sci. U.S.A.">
        <title>The putative glutamate receptor 1.1 (AtGLR1.1) functions as a regulator of carbon and nitrogen metabolism in Arabidopsis thaliana.</title>
        <authorList>
            <person name="Kang J."/>
            <person name="Turano F.J."/>
        </authorList>
    </citation>
    <scope>FUNCTION</scope>
</reference>
<reference key="8">
    <citation type="journal article" date="2004" name="Plant Cell Physiol.">
        <title>The putative glutamate receptor 1.1 (AtGLR1.1) in Arabidopsis thaliana regulates abscisic acid biosynthesis and signaling to control development and water loss.</title>
        <authorList>
            <person name="Kang J."/>
            <person name="Mehta S."/>
            <person name="Turano F.J."/>
        </authorList>
    </citation>
    <scope>FUNCTION</scope>
    <scope>DISRUPTION PHENOTYPE</scope>
</reference>
<reference key="9">
    <citation type="journal article" date="2008" name="J. Mol. Biol.">
        <title>Arabidopsis thaliana glutamate receptor ion channel function demonstrated by ion pore transplantation.</title>
        <authorList>
            <person name="Tapken D."/>
            <person name="Hollmann M."/>
        </authorList>
    </citation>
    <scope>FUNCTION</scope>
</reference>
<evidence type="ECO:0000250" key="1"/>
<evidence type="ECO:0000255" key="2"/>
<evidence type="ECO:0000269" key="3">
    <source>
    </source>
</evidence>
<evidence type="ECO:0000269" key="4">
    <source>
    </source>
</evidence>
<evidence type="ECO:0000269" key="5">
    <source>
    </source>
</evidence>
<evidence type="ECO:0000269" key="6">
    <source>
    </source>
</evidence>
<evidence type="ECO:0000305" key="7"/>
<name>GLR11_ARATH</name>
<proteinExistence type="evidence at transcript level"/>
<comment type="function">
    <text evidence="4 5 6">Glutamate-gated receptor that probably acts as a non-selective cation channel. Can transport sodium, potassium, and calcium ions. Functions as a carbon and nitrogen regulator and/or sensor that regulates carbon and nitrogen metabolism and distinct physiological process such as germination through the control of acid abscisic (ABA) biosynthesis. May be involved in light-signal transduction and calcium homeostasis via the regulation of calcium influx into cells. Seems required for the regulation of the abscisic acid (ABA) signaling pathway that modulates many aspects of plant physiology such as seed germination and response to drought (e.g. stomata opening).</text>
</comment>
<comment type="subunit">
    <text evidence="1">May form heteromers.</text>
</comment>
<comment type="subcellular location">
    <subcellularLocation>
        <location>Membrane</location>
        <topology>Multi-pass membrane protein</topology>
    </subcellularLocation>
</comment>
<comment type="tissue specificity">
    <text evidence="3">Expressed predominantly in roots. First detected in the root-shoot junction, and later in lateral roots and at the margin of matures leaves.</text>
</comment>
<comment type="disruption phenotype">
    <text evidence="5">Increased sensitivity to exogenous abscisic acid (ABA) and higher ABA levels in leaves.</text>
</comment>
<comment type="similarity">
    <text evidence="7">Belongs to the glutamate-gated ion channel (TC 1.A.10.1) family.</text>
</comment>
<feature type="signal peptide" evidence="2">
    <location>
        <begin position="1"/>
        <end position="19"/>
    </location>
</feature>
<feature type="chain" id="PRO_0000011592" description="Glutamate receptor 1.1">
    <location>
        <begin position="20"/>
        <end position="808"/>
    </location>
</feature>
<feature type="topological domain" description="Extracellular" evidence="2">
    <location>
        <begin position="20"/>
        <end position="541"/>
    </location>
</feature>
<feature type="transmembrane region" description="Helical" evidence="2">
    <location>
        <begin position="542"/>
        <end position="562"/>
    </location>
</feature>
<feature type="topological domain" description="Cytoplasmic" evidence="2">
    <location>
        <begin position="563"/>
        <end position="570"/>
    </location>
</feature>
<feature type="transmembrane region" description="Helical" evidence="2">
    <location>
        <begin position="571"/>
        <end position="591"/>
    </location>
</feature>
<feature type="topological domain" description="Cytoplasmic" evidence="2">
    <location>
        <begin position="592"/>
        <end position="602"/>
    </location>
</feature>
<feature type="transmembrane region" description="Helical" evidence="2">
    <location>
        <begin position="603"/>
        <end position="623"/>
    </location>
</feature>
<feature type="topological domain" description="Extracellular" evidence="2">
    <location>
        <begin position="624"/>
        <end position="771"/>
    </location>
</feature>
<feature type="transmembrane region" description="Helical" evidence="2">
    <location>
        <begin position="772"/>
        <end position="792"/>
    </location>
</feature>
<feature type="topological domain" description="Cytoplasmic" evidence="2">
    <location>
        <begin position="793"/>
        <end position="808"/>
    </location>
</feature>
<feature type="glycosylation site" description="N-linked (GlcNAc...) asparagine" evidence="2">
    <location>
        <position position="288"/>
    </location>
</feature>
<feature type="glycosylation site" description="N-linked (GlcNAc...) asparagine" evidence="2">
    <location>
        <position position="339"/>
    </location>
</feature>
<feature type="glycosylation site" description="N-linked (GlcNAc...) asparagine" evidence="2">
    <location>
        <position position="504"/>
    </location>
</feature>
<feature type="sequence conflict" description="In Ref. 1; AAD09173." evidence="7" ref="1">
    <original>S</original>
    <variation>P</variation>
    <location>
        <position position="564"/>
    </location>
</feature>
<sequence>MEILFSISILALLFSGVVAAPSDDDVFEEVRVGLVVDLSSIQGKILETSFNLALSDFYGINNGYRTRVSVLVRDSQGDPIIALAAATDLLKNAKAEAIVGAQSLQEAKLLATISEKAKVPVISTFLPNTLSLKKYDNFIQWTHDTTSEAKGITSLIQDFSCKSVVVIYEDADDWSESLQILVENFQDKGIYIARSASFAVSSSGENHMMNQLRKLKVSRASVFVVHMSEILVSRLFQCVEKLGLMEEAFAWILTARTMNYLEHFAITRSMQGVIGFKSYIPVSEEVKNFTSRLRKRMGDDTETEHSSVIIGLRAHDIACILANAVEKFSVSGKVEASSNVSADLLDTIRHSRFKGLSGDIQISDNKFISETFEIVNIGREKQRRIGLWSGGSFSQRRQIVWPGRSRKIPRHRVLAEKGEKKVLRVLVTAGNKVPHLVSVRPDPETGVNTVSGFCVEVFKTCIAPFNYELEFIPYRGNNDNLAYLLSTQRDKYDAAVGDITITSNRSLYVDFTLPYTDIGIGILTVKKKSQGMWTFFDPFEKSLWLASGAFFVLTGIVVWLVERSVNPEFQGSWGQQLSMMLWFGFSTIVFAHREKLQKMSSRFLVIVWVFVVLILTSSYSANLTSTKTISRMQLNHQMVFGGSTTSMTAKLGSINAVEAYAQLLRDGTLNHVINEIPYLSILIGNYPNDFVMTDRVTNTNGFGFMFQKGSDLVPKVSREIAKLRSLGMLKDMEKKWFQKLDSLNVHSNTEEVASTNDDDEASKRFTFRELRGLFIIAGAAHVLVLALHLFHTRQEVSRLCTKLQSFYK</sequence>
<gene>
    <name type="primary">GLR1.1</name>
    <name type="synonym">GLR1</name>
    <name type="ordered locus">At3g04110</name>
    <name type="ORF">T6K12.27</name>
</gene>
<dbReference type="EMBL" id="AF079998">
    <property type="protein sequence ID" value="AAD09173.1"/>
    <property type="molecule type" value="mRNA"/>
</dbReference>
<dbReference type="EMBL" id="AC016829">
    <property type="protein sequence ID" value="AAF26802.1"/>
    <property type="molecule type" value="Genomic_DNA"/>
</dbReference>
<dbReference type="EMBL" id="CP002686">
    <property type="protein sequence ID" value="AEE74038.1"/>
    <property type="molecule type" value="Genomic_DNA"/>
</dbReference>
<dbReference type="EMBL" id="AK117584">
    <property type="protein sequence ID" value="BAC42242.1"/>
    <property type="molecule type" value="mRNA"/>
</dbReference>
<dbReference type="PIR" id="T51138">
    <property type="entry name" value="T51138"/>
</dbReference>
<dbReference type="RefSeq" id="NP_187061.1">
    <property type="nucleotide sequence ID" value="NM_111282.3"/>
</dbReference>
<dbReference type="SMR" id="Q9M8W7"/>
<dbReference type="BioGRID" id="4901">
    <property type="interactions" value="26"/>
</dbReference>
<dbReference type="FunCoup" id="Q9M8W7">
    <property type="interactions" value="173"/>
</dbReference>
<dbReference type="IntAct" id="Q9M8W7">
    <property type="interactions" value="15"/>
</dbReference>
<dbReference type="STRING" id="3702.Q9M8W7"/>
<dbReference type="TCDB" id="1.A.10.1.7">
    <property type="family name" value="the glutamate-gated ion channel (gic) family of neurotransmitter receptors"/>
</dbReference>
<dbReference type="GlyCosmos" id="Q9M8W7">
    <property type="glycosylation" value="3 sites, No reported glycans"/>
</dbReference>
<dbReference type="GlyGen" id="Q9M8W7">
    <property type="glycosylation" value="3 sites"/>
</dbReference>
<dbReference type="PaxDb" id="3702-AT3G04110.1"/>
<dbReference type="ProteomicsDB" id="248597"/>
<dbReference type="EnsemblPlants" id="AT3G04110.1">
    <property type="protein sequence ID" value="AT3G04110.1"/>
    <property type="gene ID" value="AT3G04110"/>
</dbReference>
<dbReference type="GeneID" id="819566"/>
<dbReference type="Gramene" id="AT3G04110.1">
    <property type="protein sequence ID" value="AT3G04110.1"/>
    <property type="gene ID" value="AT3G04110"/>
</dbReference>
<dbReference type="KEGG" id="ath:AT3G04110"/>
<dbReference type="Araport" id="AT3G04110"/>
<dbReference type="TAIR" id="AT3G04110">
    <property type="gene designation" value="GLR1.1"/>
</dbReference>
<dbReference type="eggNOG" id="KOG1052">
    <property type="taxonomic scope" value="Eukaryota"/>
</dbReference>
<dbReference type="HOGENOM" id="CLU_007358_0_2_1"/>
<dbReference type="InParanoid" id="Q9M8W7"/>
<dbReference type="OMA" id="NKVPNLM"/>
<dbReference type="PhylomeDB" id="Q9M8W7"/>
<dbReference type="PRO" id="PR:Q9M8W7"/>
<dbReference type="Proteomes" id="UP000006548">
    <property type="component" value="Chromosome 3"/>
</dbReference>
<dbReference type="ExpressionAtlas" id="Q9M8W7">
    <property type="expression patterns" value="baseline and differential"/>
</dbReference>
<dbReference type="GO" id="GO:0005886">
    <property type="term" value="C:plasma membrane"/>
    <property type="evidence" value="ECO:0000250"/>
    <property type="project" value="UniProtKB"/>
</dbReference>
<dbReference type="GO" id="GO:0005262">
    <property type="term" value="F:calcium channel activity"/>
    <property type="evidence" value="ECO:0000314"/>
    <property type="project" value="UniProtKB"/>
</dbReference>
<dbReference type="GO" id="GO:0008066">
    <property type="term" value="F:glutamate receptor activity"/>
    <property type="evidence" value="ECO:0000250"/>
    <property type="project" value="UniProtKB"/>
</dbReference>
<dbReference type="GO" id="GO:0015276">
    <property type="term" value="F:ligand-gated monoatomic ion channel activity"/>
    <property type="evidence" value="ECO:0007669"/>
    <property type="project" value="InterPro"/>
</dbReference>
<dbReference type="GO" id="GO:0005261">
    <property type="term" value="F:monoatomic cation channel activity"/>
    <property type="evidence" value="ECO:0000314"/>
    <property type="project" value="TAIR"/>
</dbReference>
<dbReference type="GO" id="GO:0005267">
    <property type="term" value="F:potassium channel activity"/>
    <property type="evidence" value="ECO:0000314"/>
    <property type="project" value="UniProtKB"/>
</dbReference>
<dbReference type="GO" id="GO:0005272">
    <property type="term" value="F:sodium channel activity"/>
    <property type="evidence" value="ECO:0000314"/>
    <property type="project" value="UniProtKB"/>
</dbReference>
<dbReference type="GO" id="GO:0009738">
    <property type="term" value="P:abscisic acid-activated signaling pathway"/>
    <property type="evidence" value="ECO:0007669"/>
    <property type="project" value="UniProtKB-KW"/>
</dbReference>
<dbReference type="GO" id="GO:0006816">
    <property type="term" value="P:calcium ion transport"/>
    <property type="evidence" value="ECO:0000314"/>
    <property type="project" value="UniProtKB"/>
</dbReference>
<dbReference type="GO" id="GO:0019722">
    <property type="term" value="P:calcium-mediated signaling"/>
    <property type="evidence" value="ECO:0000250"/>
    <property type="project" value="UniProtKB"/>
</dbReference>
<dbReference type="GO" id="GO:0071230">
    <property type="term" value="P:cellular response to amino acid stimulus"/>
    <property type="evidence" value="ECO:0000250"/>
    <property type="project" value="UniProtKB"/>
</dbReference>
<dbReference type="GO" id="GO:0030003">
    <property type="term" value="P:intracellular monoatomic cation homeostasis"/>
    <property type="evidence" value="ECO:0000314"/>
    <property type="project" value="TAIR"/>
</dbReference>
<dbReference type="GO" id="GO:0006813">
    <property type="term" value="P:potassium ion transport"/>
    <property type="evidence" value="ECO:0000314"/>
    <property type="project" value="UniProtKB"/>
</dbReference>
<dbReference type="GO" id="GO:0009737">
    <property type="term" value="P:response to abscisic acid"/>
    <property type="evidence" value="ECO:0000315"/>
    <property type="project" value="UniProtKB"/>
</dbReference>
<dbReference type="GO" id="GO:0006814">
    <property type="term" value="P:sodium ion transport"/>
    <property type="evidence" value="ECO:0000314"/>
    <property type="project" value="UniProtKB"/>
</dbReference>
<dbReference type="CDD" id="cd19990">
    <property type="entry name" value="PBP1_GABAb_receptor_plant"/>
    <property type="match status" value="1"/>
</dbReference>
<dbReference type="FunFam" id="3.40.190.10:FF:000594">
    <property type="entry name" value="Glutamate receptor 1.4"/>
    <property type="match status" value="1"/>
</dbReference>
<dbReference type="Gene3D" id="1.10.287.70">
    <property type="match status" value="1"/>
</dbReference>
<dbReference type="Gene3D" id="3.40.50.2300">
    <property type="match status" value="2"/>
</dbReference>
<dbReference type="Gene3D" id="3.40.190.10">
    <property type="entry name" value="Periplasmic binding protein-like II"/>
    <property type="match status" value="2"/>
</dbReference>
<dbReference type="InterPro" id="IPR001828">
    <property type="entry name" value="ANF_lig-bd_rcpt"/>
</dbReference>
<dbReference type="InterPro" id="IPR044440">
    <property type="entry name" value="GABAb_receptor_plant_PBP1"/>
</dbReference>
<dbReference type="InterPro" id="IPR015683">
    <property type="entry name" value="Ionotropic_Glu_rcpt"/>
</dbReference>
<dbReference type="InterPro" id="IPR001320">
    <property type="entry name" value="Iontro_rcpt_C"/>
</dbReference>
<dbReference type="InterPro" id="IPR017103">
    <property type="entry name" value="Iontropic_Glu_rcpt_pln"/>
</dbReference>
<dbReference type="InterPro" id="IPR028082">
    <property type="entry name" value="Peripla_BP_I"/>
</dbReference>
<dbReference type="InterPro" id="IPR001638">
    <property type="entry name" value="Solute-binding_3/MltF_N"/>
</dbReference>
<dbReference type="PANTHER" id="PTHR18966">
    <property type="entry name" value="IONOTROPIC GLUTAMATE RECEPTOR"/>
    <property type="match status" value="1"/>
</dbReference>
<dbReference type="Pfam" id="PF01094">
    <property type="entry name" value="ANF_receptor"/>
    <property type="match status" value="1"/>
</dbReference>
<dbReference type="Pfam" id="PF00060">
    <property type="entry name" value="Lig_chan"/>
    <property type="match status" value="1"/>
</dbReference>
<dbReference type="Pfam" id="PF00497">
    <property type="entry name" value="SBP_bac_3"/>
    <property type="match status" value="1"/>
</dbReference>
<dbReference type="PIRSF" id="PIRSF037090">
    <property type="entry name" value="Iontro_Glu-like_rcpt_pln"/>
    <property type="match status" value="1"/>
</dbReference>
<dbReference type="SMART" id="SM00079">
    <property type="entry name" value="PBPe"/>
    <property type="match status" value="1"/>
</dbReference>
<dbReference type="SUPFAM" id="SSF53822">
    <property type="entry name" value="Periplasmic binding protein-like I"/>
    <property type="match status" value="1"/>
</dbReference>
<dbReference type="SUPFAM" id="SSF53850">
    <property type="entry name" value="Periplasmic binding protein-like II"/>
    <property type="match status" value="1"/>
</dbReference>
<organism>
    <name type="scientific">Arabidopsis thaliana</name>
    <name type="common">Mouse-ear cress</name>
    <dbReference type="NCBI Taxonomy" id="3702"/>
    <lineage>
        <taxon>Eukaryota</taxon>
        <taxon>Viridiplantae</taxon>
        <taxon>Streptophyta</taxon>
        <taxon>Embryophyta</taxon>
        <taxon>Tracheophyta</taxon>
        <taxon>Spermatophyta</taxon>
        <taxon>Magnoliopsida</taxon>
        <taxon>eudicotyledons</taxon>
        <taxon>Gunneridae</taxon>
        <taxon>Pentapetalae</taxon>
        <taxon>rosids</taxon>
        <taxon>malvids</taxon>
        <taxon>Brassicales</taxon>
        <taxon>Brassicaceae</taxon>
        <taxon>Camelineae</taxon>
        <taxon>Arabidopsis</taxon>
    </lineage>
</organism>
<keyword id="KW-0938">Abscisic acid signaling pathway</keyword>
<keyword id="KW-0325">Glycoprotein</keyword>
<keyword id="KW-0407">Ion channel</keyword>
<keyword id="KW-0406">Ion transport</keyword>
<keyword id="KW-1071">Ligand-gated ion channel</keyword>
<keyword id="KW-0472">Membrane</keyword>
<keyword id="KW-0675">Receptor</keyword>
<keyword id="KW-1185">Reference proteome</keyword>
<keyword id="KW-0732">Signal</keyword>
<keyword id="KW-0812">Transmembrane</keyword>
<keyword id="KW-1133">Transmembrane helix</keyword>
<keyword id="KW-0813">Transport</keyword>
<protein>
    <recommendedName>
        <fullName>Glutamate receptor 1.1</fullName>
        <shortName>AtGLR1</shortName>
    </recommendedName>
    <alternativeName>
        <fullName>Ligand-gated ion channel 1.1</fullName>
    </alternativeName>
</protein>
<accession>Q9M8W7</accession>
<accession>Q9ZT37</accession>